<protein>
    <recommendedName>
        <fullName evidence="1">Large ribosomal subunit assembly factor BipA</fullName>
        <ecNumber evidence="1 2">3.6.5.-</ecNumber>
    </recommendedName>
    <alternativeName>
        <fullName evidence="7">50S ribosomal subunit assembly factor BipA</fullName>
    </alternativeName>
    <alternativeName>
        <fullName evidence="1">GTP-binding protein BipA</fullName>
    </alternativeName>
    <alternativeName>
        <fullName evidence="5">Ribosome-dependent GTPase BipA</fullName>
    </alternativeName>
</protein>
<name>BIPA_SALTY</name>
<reference key="1">
    <citation type="journal article" date="2001" name="Nature">
        <title>Complete genome sequence of Salmonella enterica serovar Typhimurium LT2.</title>
        <authorList>
            <person name="McClelland M."/>
            <person name="Sanderson K.E."/>
            <person name="Spieth J."/>
            <person name="Clifton S.W."/>
            <person name="Latreille P."/>
            <person name="Courtney L."/>
            <person name="Porwollik S."/>
            <person name="Ali J."/>
            <person name="Dante M."/>
            <person name="Du F."/>
            <person name="Hou S."/>
            <person name="Layman D."/>
            <person name="Leonard S."/>
            <person name="Nguyen C."/>
            <person name="Scott K."/>
            <person name="Holmes A."/>
            <person name="Grewal N."/>
            <person name="Mulvaney E."/>
            <person name="Ryan E."/>
            <person name="Sun H."/>
            <person name="Florea L."/>
            <person name="Miller W."/>
            <person name="Stoneking T."/>
            <person name="Nhan M."/>
            <person name="Waterston R."/>
            <person name="Wilson R.K."/>
        </authorList>
    </citation>
    <scope>NUCLEOTIDE SEQUENCE [LARGE SCALE GENOMIC DNA]</scope>
    <source>
        <strain>LT2 / SGSC1412 / ATCC 700720</strain>
    </source>
</reference>
<reference key="2">
    <citation type="journal article" date="1995" name="Mol. Microbiol.">
        <title>Salmonella typhimurium responses to a bactericidal protein from human neutrophils.</title>
        <authorList>
            <person name="Qi S.Y."/>
            <person name="Li Y."/>
            <person name="Szyroki A."/>
            <person name="Giles I.G."/>
            <person name="Moir A."/>
            <person name="O'Connor C.D."/>
        </authorList>
    </citation>
    <scope>INDUCTION BY BPI</scope>
</reference>
<reference key="3">
    <citation type="journal article" date="2008" name="J. Bacteriol.">
        <title>Salmonella enterica serovar Typhimurium BipA exhibits two distinct ribosome binding modes.</title>
        <authorList>
            <person name="deLivron M.A."/>
            <person name="Robinson V.L."/>
        </authorList>
    </citation>
    <scope>FUNCTION</scope>
    <scope>CATALYTIC ACTIVITY</scope>
    <scope>ACTIVITY REGULATION</scope>
    <scope>SUBUNIT</scope>
    <scope>SUBCELLULAR LOCATION</scope>
    <scope>MUTAGENESIS OF LYS-18</scope>
    <source>
        <strain>LT2 / SGSC1412 / ATCC 700720</strain>
        <strain>SB300A</strain>
    </source>
</reference>
<reference key="4">
    <citation type="journal article" date="2009" name="Biochemistry">
        <title>A novel domain in translational GTPase BipA mediates interaction with the 70S ribosome and influences GTP hydrolysis.</title>
        <authorList>
            <person name="deLivron M.A."/>
            <person name="Makanji H.S."/>
            <person name="Lane M.C."/>
            <person name="Robinson V.L."/>
        </authorList>
    </citation>
    <scope>FUNCTION</scope>
    <scope>CATALYTIC ACTIVITY</scope>
    <scope>ACTIVITY REGULATION</scope>
    <scope>DOMAIN</scope>
    <scope>MUTAGENESIS OF ARG-375; 422-ARG-LYS-423; LYS-427; 434-LYS--ARG-436; ARG-507; LYS-509; HIS-527; ARG-529; ASN-536; LYS-541; LYS-542; THR-544; ARG-547; LYS-562; ARG-586; ARG-588 AND 597-ARG--GLU-607</scope>
    <source>
        <strain>LT2 / SGSC1412 / ATCC 700720</strain>
        <strain>SB300A</strain>
    </source>
</reference>
<reference evidence="9" key="5">
    <citation type="journal article" date="2007" name="J. Biomol. Struct. Dyn.">
        <title>Crystallographic and Biochemical Characterization of the GTPase and Ribosome Binding Properties of Salmonella typhimuirum BipA.</title>
        <authorList>
            <person name="Brown R.S."/>
            <person name="deLivron M.A."/>
            <person name="Robinson V.L."/>
        </authorList>
    </citation>
    <scope>X-RAY CRYSTALLOGRAPHY (2.33 ANGSTROMS)</scope>
</reference>
<comment type="function">
    <text evidence="1 2 3">A 50S ribosomal subunit assembly protein with GTPase activity, required for 50S subunit assembly at low temperatures, may also play a role in translation. Binds GTP and analogs. Binds the 70S ribosome between the 30S and 50S subunits, in a similar position as ribosome-bound EF-G; it contacts a number of ribosomal proteins, both rRNAs and the A-site tRNA (By similarity). A ribosome-stimulated GTPase, GTPase activity increases 4 fold in the presence of 70S ribosomes. Binds 70S ribosomes in the presence of GTP or its non-hydrolyzable analog GMPPNP; in the presence of ppGpp or under stress conditions it binds to 30S ribosomal subunits (PubMed:18621905, PubMed:19803466).</text>
</comment>
<comment type="catalytic activity">
    <reaction evidence="1 2 3">
        <text>GTP + H2O = GDP + phosphate + H(+)</text>
        <dbReference type="Rhea" id="RHEA:19669"/>
        <dbReference type="ChEBI" id="CHEBI:15377"/>
        <dbReference type="ChEBI" id="CHEBI:15378"/>
        <dbReference type="ChEBI" id="CHEBI:37565"/>
        <dbReference type="ChEBI" id="CHEBI:43474"/>
        <dbReference type="ChEBI" id="CHEBI:58189"/>
    </reaction>
</comment>
<comment type="activity regulation">
    <text evidence="2 3">Ribosome-associated GTPase is not affected by low levels of ppGpp, &gt;40 uM ppGpp and &gt;50 uM GDP inhibit GTPase (PubMed:18621905). The C-terminus (residues 387-607 or 481-607) inhibits GTPase activity, in its absence kcat increases, but GTPase is no longer stimulated by 70S ribosome or 30S or 50S subunits (PubMed:19803466).</text>
</comment>
<comment type="subunit">
    <text evidence="1 2">Monomer.</text>
</comment>
<comment type="subcellular location">
    <subcellularLocation>
        <location evidence="1 8">Cytoplasm</location>
    </subcellularLocation>
    <text evidence="2">During exponential growth the GTP-bound state associates 1:1 with 70S ribosomes. Under stress conditions (induction of the stringent response, growth at 42 or 16 degrees Celsius) associates with 30S ribosomal subunits only.</text>
</comment>
<comment type="induction">
    <text evidence="4">Induced 7-fold when cells are treated with human bactericidal permeability-increasing protein (BPI, AC P17213) (at protein level).</text>
</comment>
<comment type="domain">
    <text evidence="3">Has 5 domains; domain I (residues 1-202, also called the G domain), II (203-305, also called the beta barrel domain), III (306-386) V (387-479) and the C-terminal domain (CTD 480-607) which is BipA-specific. Domains I-V are homologous to domains in EF-G and LepA; although the domains are similar, their relative arrangement among these proteins is different. Domains I and II are not required for ribosome binding, although in their absence no 30S binding under stress is seen, whereas domains III, V and the CTD are required to bind both 70S and 30S ribosomes. The data suggests interdomain communication modulates GTPase and ribosome binding.</text>
</comment>
<comment type="similarity">
    <text evidence="1">Belongs to the TRAFAC class translation factor GTPase superfamily. Classic translation factor GTPase family. BipA subfamily.</text>
</comment>
<keyword id="KW-0002">3D-structure</keyword>
<keyword id="KW-0963">Cytoplasm</keyword>
<keyword id="KW-0342">GTP-binding</keyword>
<keyword id="KW-0378">Hydrolase</keyword>
<keyword id="KW-0547">Nucleotide-binding</keyword>
<keyword id="KW-1185">Reference proteome</keyword>
<keyword id="KW-0690">Ribosome biogenesis</keyword>
<keyword id="KW-0694">RNA-binding</keyword>
<keyword id="KW-0699">rRNA-binding</keyword>
<keyword id="KW-0820">tRNA-binding</keyword>
<dbReference type="EC" id="3.6.5.-" evidence="1 2"/>
<dbReference type="EMBL" id="AE006468">
    <property type="protein sequence ID" value="AAL22848.1"/>
    <property type="molecule type" value="Genomic_DNA"/>
</dbReference>
<dbReference type="PIR" id="S70722">
    <property type="entry name" value="S70722"/>
</dbReference>
<dbReference type="PDB" id="8EWH">
    <property type="method" value="X-ray"/>
    <property type="resolution" value="2.33 A"/>
    <property type="chains" value="A/B=1-607"/>
</dbReference>
<dbReference type="PDBsum" id="8EWH"/>
<dbReference type="SMR" id="H9L427"/>
<dbReference type="STRING" id="99287.STM4009"/>
<dbReference type="PaxDb" id="99287-STM4009"/>
<dbReference type="KEGG" id="stm:STM4009"/>
<dbReference type="PATRIC" id="fig|99287.12.peg.4224"/>
<dbReference type="HOGENOM" id="CLU_017016_4_0_6"/>
<dbReference type="OMA" id="MSMLFTI"/>
<dbReference type="PhylomeDB" id="H9L427"/>
<dbReference type="BioCyc" id="SENT99287:STM4009-MONOMER"/>
<dbReference type="Proteomes" id="UP000001014">
    <property type="component" value="Chromosome"/>
</dbReference>
<dbReference type="GO" id="GO:0005829">
    <property type="term" value="C:cytosol"/>
    <property type="evidence" value="ECO:0000318"/>
    <property type="project" value="GO_Central"/>
</dbReference>
<dbReference type="GO" id="GO:1990904">
    <property type="term" value="C:ribonucleoprotein complex"/>
    <property type="evidence" value="ECO:0000318"/>
    <property type="project" value="GO_Central"/>
</dbReference>
<dbReference type="GO" id="GO:0005525">
    <property type="term" value="F:GTP binding"/>
    <property type="evidence" value="ECO:0007669"/>
    <property type="project" value="UniProtKB-UniRule"/>
</dbReference>
<dbReference type="GO" id="GO:0003924">
    <property type="term" value="F:GTPase activity"/>
    <property type="evidence" value="ECO:0000318"/>
    <property type="project" value="GO_Central"/>
</dbReference>
<dbReference type="GO" id="GO:0097216">
    <property type="term" value="F:guanosine tetraphosphate binding"/>
    <property type="evidence" value="ECO:0007669"/>
    <property type="project" value="UniProtKB-ARBA"/>
</dbReference>
<dbReference type="GO" id="GO:0043022">
    <property type="term" value="F:ribosome binding"/>
    <property type="evidence" value="ECO:0007669"/>
    <property type="project" value="UniProtKB-UniRule"/>
</dbReference>
<dbReference type="GO" id="GO:0019843">
    <property type="term" value="F:rRNA binding"/>
    <property type="evidence" value="ECO:0007669"/>
    <property type="project" value="UniProtKB-KW"/>
</dbReference>
<dbReference type="GO" id="GO:0000049">
    <property type="term" value="F:tRNA binding"/>
    <property type="evidence" value="ECO:0007669"/>
    <property type="project" value="UniProtKB-KW"/>
</dbReference>
<dbReference type="GO" id="GO:0000027">
    <property type="term" value="P:ribosomal large subunit assembly"/>
    <property type="evidence" value="ECO:0007669"/>
    <property type="project" value="UniProtKB-UniRule"/>
</dbReference>
<dbReference type="CDD" id="cd16263">
    <property type="entry name" value="BipA_III"/>
    <property type="match status" value="1"/>
</dbReference>
<dbReference type="CDD" id="cd03710">
    <property type="entry name" value="BipA_TypA_C"/>
    <property type="match status" value="1"/>
</dbReference>
<dbReference type="CDD" id="cd03691">
    <property type="entry name" value="BipA_TypA_II"/>
    <property type="match status" value="1"/>
</dbReference>
<dbReference type="CDD" id="cd01891">
    <property type="entry name" value="TypA_BipA"/>
    <property type="match status" value="1"/>
</dbReference>
<dbReference type="FunFam" id="2.40.30.10:FF:000016">
    <property type="entry name" value="GTP-binding protein TypA"/>
    <property type="match status" value="1"/>
</dbReference>
<dbReference type="FunFam" id="2.40.50.250:FF:000001">
    <property type="entry name" value="GTP-binding protein TypA"/>
    <property type="match status" value="1"/>
</dbReference>
<dbReference type="FunFam" id="3.30.70.240:FF:000002">
    <property type="entry name" value="GTP-binding protein TypA"/>
    <property type="match status" value="1"/>
</dbReference>
<dbReference type="FunFam" id="3.30.70.870:FF:000003">
    <property type="entry name" value="GTP-binding protein TypA"/>
    <property type="match status" value="1"/>
</dbReference>
<dbReference type="FunFam" id="3.40.50.300:FF:000055">
    <property type="entry name" value="GTP-binding protein TypA"/>
    <property type="match status" value="1"/>
</dbReference>
<dbReference type="Gene3D" id="3.30.70.240">
    <property type="match status" value="1"/>
</dbReference>
<dbReference type="Gene3D" id="2.40.50.250">
    <property type="entry name" value="bipa protein"/>
    <property type="match status" value="1"/>
</dbReference>
<dbReference type="Gene3D" id="3.30.70.870">
    <property type="entry name" value="Elongation Factor G (Translational Gtpase), domain 3"/>
    <property type="match status" value="1"/>
</dbReference>
<dbReference type="Gene3D" id="3.40.50.300">
    <property type="entry name" value="P-loop containing nucleotide triphosphate hydrolases"/>
    <property type="match status" value="1"/>
</dbReference>
<dbReference type="Gene3D" id="2.40.30.10">
    <property type="entry name" value="Translation factors"/>
    <property type="match status" value="1"/>
</dbReference>
<dbReference type="HAMAP" id="MF_00849">
    <property type="entry name" value="BipA"/>
    <property type="match status" value="1"/>
</dbReference>
<dbReference type="InterPro" id="IPR006298">
    <property type="entry name" value="BipA"/>
</dbReference>
<dbReference type="InterPro" id="IPR048876">
    <property type="entry name" value="BipA_C"/>
</dbReference>
<dbReference type="InterPro" id="IPR047041">
    <property type="entry name" value="BipA_GTP-bd_dom"/>
</dbReference>
<dbReference type="InterPro" id="IPR047042">
    <property type="entry name" value="BipA_II"/>
</dbReference>
<dbReference type="InterPro" id="IPR047043">
    <property type="entry name" value="BipA_III"/>
</dbReference>
<dbReference type="InterPro" id="IPR035651">
    <property type="entry name" value="BipA_V"/>
</dbReference>
<dbReference type="InterPro" id="IPR035647">
    <property type="entry name" value="EFG_III/V"/>
</dbReference>
<dbReference type="InterPro" id="IPR000640">
    <property type="entry name" value="EFG_V-like"/>
</dbReference>
<dbReference type="InterPro" id="IPR004161">
    <property type="entry name" value="EFTu-like_2"/>
</dbReference>
<dbReference type="InterPro" id="IPR031157">
    <property type="entry name" value="G_TR_CS"/>
</dbReference>
<dbReference type="InterPro" id="IPR027417">
    <property type="entry name" value="P-loop_NTPase"/>
</dbReference>
<dbReference type="InterPro" id="IPR005225">
    <property type="entry name" value="Small_GTP-bd"/>
</dbReference>
<dbReference type="InterPro" id="IPR000795">
    <property type="entry name" value="T_Tr_GTP-bd_dom"/>
</dbReference>
<dbReference type="InterPro" id="IPR009000">
    <property type="entry name" value="Transl_B-barrel_sf"/>
</dbReference>
<dbReference type="InterPro" id="IPR042116">
    <property type="entry name" value="TypA/BipA_C"/>
</dbReference>
<dbReference type="NCBIfam" id="NF007583">
    <property type="entry name" value="PRK10218.1"/>
    <property type="match status" value="1"/>
</dbReference>
<dbReference type="NCBIfam" id="TIGR00231">
    <property type="entry name" value="small_GTP"/>
    <property type="match status" value="1"/>
</dbReference>
<dbReference type="NCBIfam" id="TIGR01394">
    <property type="entry name" value="TypA_BipA"/>
    <property type="match status" value="1"/>
</dbReference>
<dbReference type="PANTHER" id="PTHR42908:SF8">
    <property type="entry name" value="TR-TYPE G DOMAIN-CONTAINING PROTEIN"/>
    <property type="match status" value="1"/>
</dbReference>
<dbReference type="PANTHER" id="PTHR42908">
    <property type="entry name" value="TRANSLATION ELONGATION FACTOR-RELATED"/>
    <property type="match status" value="1"/>
</dbReference>
<dbReference type="Pfam" id="PF21018">
    <property type="entry name" value="BipA_C"/>
    <property type="match status" value="1"/>
</dbReference>
<dbReference type="Pfam" id="PF00679">
    <property type="entry name" value="EFG_C"/>
    <property type="match status" value="1"/>
</dbReference>
<dbReference type="Pfam" id="PF00009">
    <property type="entry name" value="GTP_EFTU"/>
    <property type="match status" value="1"/>
</dbReference>
<dbReference type="Pfam" id="PF03144">
    <property type="entry name" value="GTP_EFTU_D2"/>
    <property type="match status" value="1"/>
</dbReference>
<dbReference type="PRINTS" id="PR00315">
    <property type="entry name" value="ELONGATNFCT"/>
</dbReference>
<dbReference type="SUPFAM" id="SSF54980">
    <property type="entry name" value="EF-G C-terminal domain-like"/>
    <property type="match status" value="2"/>
</dbReference>
<dbReference type="SUPFAM" id="SSF52540">
    <property type="entry name" value="P-loop containing nucleoside triphosphate hydrolases"/>
    <property type="match status" value="1"/>
</dbReference>
<dbReference type="SUPFAM" id="SSF50447">
    <property type="entry name" value="Translation proteins"/>
    <property type="match status" value="1"/>
</dbReference>
<dbReference type="PROSITE" id="PS00301">
    <property type="entry name" value="G_TR_1"/>
    <property type="match status" value="1"/>
</dbReference>
<dbReference type="PROSITE" id="PS51722">
    <property type="entry name" value="G_TR_2"/>
    <property type="match status" value="1"/>
</dbReference>
<feature type="chain" id="PRO_0000449251" description="Large ribosomal subunit assembly factor BipA">
    <location>
        <begin position="1"/>
        <end position="607"/>
    </location>
</feature>
<feature type="domain" description="tr-type G" evidence="1">
    <location>
        <begin position="3"/>
        <end position="198"/>
    </location>
</feature>
<feature type="region of interest" description="C-terminal domain (CTD), required but not sufficient to bind 70S or 30S ribosomes" evidence="3">
    <location>
        <begin position="481"/>
        <end position="607"/>
    </location>
</feature>
<feature type="binding site" evidence="1">
    <location>
        <begin position="15"/>
        <end position="20"/>
    </location>
    <ligand>
        <name>GTP</name>
        <dbReference type="ChEBI" id="CHEBI:37565"/>
    </ligand>
</feature>
<feature type="binding site" evidence="1">
    <location>
        <begin position="128"/>
        <end position="131"/>
    </location>
    <ligand>
        <name>GTP</name>
        <dbReference type="ChEBI" id="CHEBI:37565"/>
    </ligand>
</feature>
<feature type="mutagenesis site" description="No longer binds to 70S ribosomes, has no GTPase activity." evidence="2">
    <original>K</original>
    <variation>A</variation>
    <location>
        <position position="18"/>
    </location>
</feature>
<feature type="mutagenesis site" description="Still binds to 70S ribosomes in presence of GMPPNP." evidence="3">
    <original>R</original>
    <variation>A</variation>
    <location>
        <position position="375"/>
    </location>
</feature>
<feature type="mutagenesis site" description="Still binds to 70S ribosomes in presence of GMPPNP." evidence="3">
    <original>RK</original>
    <variation>AA</variation>
    <location>
        <begin position="422"/>
        <end position="423"/>
    </location>
</feature>
<feature type="mutagenesis site" description="No longer binds to 70S ribosomes in presence of GMPPNP." evidence="3">
    <original>K</original>
    <variation>A</variation>
    <location>
        <position position="427"/>
    </location>
</feature>
<feature type="mutagenesis site" description="No longer binds to 70S ribosomes in presence of GMPPNP." evidence="3">
    <original>KGR</original>
    <variation>AGA</variation>
    <location>
        <begin position="434"/>
        <end position="436"/>
    </location>
</feature>
<feature type="mutagenesis site" description="Still binds to 70S ribosomes in presence of GMPPNP." evidence="3">
    <original>R</original>
    <variation>A</variation>
    <location>
        <position position="507"/>
    </location>
</feature>
<feature type="mutagenesis site" description="Still binds to 70S ribosomes in presence of GMPPNP." evidence="3">
    <original>K</original>
    <variation>A</variation>
    <location>
        <position position="509"/>
    </location>
</feature>
<feature type="mutagenesis site" description="No longer binds to 70S ribosomes in presence of GMPPNP." evidence="3">
    <original>H</original>
    <variation>A</variation>
    <location>
        <position position="527"/>
    </location>
</feature>
<feature type="mutagenesis site" description="Still binds to 70S ribosomes in presence of GMPPNP." evidence="3">
    <original>H</original>
    <variation>K</variation>
    <location>
        <position position="527"/>
    </location>
</feature>
<feature type="mutagenesis site" description="No longer binds to 70S ribosomes in presence of GMPPNP." evidence="3">
    <original>R</original>
    <variation>A</variation>
    <location>
        <position position="529"/>
    </location>
</feature>
<feature type="mutagenesis site" description="No longer binds to 70S ribosomes in presence of GMPPNP." evidence="3">
    <original>N</original>
    <variation>A</variation>
    <location>
        <position position="536"/>
    </location>
</feature>
<feature type="mutagenesis site" description="No longer binds to 70S ribosomes in presence of GMPPNP." evidence="3">
    <original>K</original>
    <variation>A</variation>
    <location>
        <position position="541"/>
    </location>
</feature>
<feature type="mutagenesis site" description="No longer binds to 70S ribosomes in presence of GMPPNP." evidence="3">
    <original>K</original>
    <variation>A</variation>
    <location>
        <position position="542"/>
    </location>
</feature>
<feature type="mutagenesis site" description="No longer binds to 70S ribosomes in presence of GMPPNP." evidence="3">
    <original>T</original>
    <variation>P</variation>
    <location>
        <position position="544"/>
    </location>
</feature>
<feature type="mutagenesis site" description="No longer binds to 70S ribosomes in presence of GMPPNP." evidence="3">
    <original>R</original>
    <variation>A</variation>
    <location>
        <position position="547"/>
    </location>
</feature>
<feature type="mutagenesis site" description="No longer binds to 70S ribosomes in presence of GMPPNP." evidence="3">
    <original>K</original>
    <variation>A</variation>
    <location>
        <position position="562"/>
    </location>
</feature>
<feature type="mutagenesis site" description="No longer binds to 70S ribosomes in presence of GMPPNP, altered secondary structure." evidence="3">
    <original>R</original>
    <variation>A</variation>
    <location>
        <position position="586"/>
    </location>
</feature>
<feature type="mutagenesis site" description="No longer binds to 70S ribosomes in presence of GMPPNP, altered secondary structure." evidence="3">
    <original>R</original>
    <variation>A</variation>
    <location>
        <position position="588"/>
    </location>
</feature>
<feature type="mutagenesis site" description="No longer associates with 70S ribosomes." evidence="3">
    <location>
        <begin position="597"/>
        <end position="607"/>
    </location>
</feature>
<feature type="strand" evidence="10">
    <location>
        <begin position="5"/>
        <end position="12"/>
    </location>
</feature>
<feature type="helix" evidence="10">
    <location>
        <begin position="18"/>
        <end position="28"/>
    </location>
</feature>
<feature type="strand" evidence="10">
    <location>
        <begin position="59"/>
        <end position="65"/>
    </location>
</feature>
<feature type="strand" evidence="10">
    <location>
        <begin position="68"/>
        <end position="74"/>
    </location>
</feature>
<feature type="helix" evidence="10">
    <location>
        <begin position="82"/>
        <end position="89"/>
    </location>
</feature>
<feature type="strand" evidence="10">
    <location>
        <begin position="93"/>
        <end position="100"/>
    </location>
</feature>
<feature type="turn" evidence="10">
    <location>
        <begin position="101"/>
        <end position="103"/>
    </location>
</feature>
<feature type="helix" evidence="10">
    <location>
        <begin position="107"/>
        <end position="109"/>
    </location>
</feature>
<feature type="helix" evidence="10">
    <location>
        <begin position="110"/>
        <end position="118"/>
    </location>
</feature>
<feature type="strand" evidence="10">
    <location>
        <begin position="123"/>
        <end position="128"/>
    </location>
</feature>
<feature type="helix" evidence="10">
    <location>
        <begin position="137"/>
        <end position="150"/>
    </location>
</feature>
<feature type="helix" evidence="10">
    <location>
        <begin position="155"/>
        <end position="158"/>
    </location>
</feature>
<feature type="strand" evidence="10">
    <location>
        <begin position="162"/>
        <end position="166"/>
    </location>
</feature>
<feature type="turn" evidence="10">
    <location>
        <begin position="167"/>
        <end position="170"/>
    </location>
</feature>
<feature type="strand" evidence="10">
    <location>
        <begin position="171"/>
        <end position="175"/>
    </location>
</feature>
<feature type="strand" evidence="10">
    <location>
        <begin position="181"/>
        <end position="183"/>
    </location>
</feature>
<feature type="helix" evidence="10">
    <location>
        <begin position="184"/>
        <end position="193"/>
    </location>
</feature>
<feature type="strand" evidence="10">
    <location>
        <begin position="200"/>
        <end position="203"/>
    </location>
</feature>
<feature type="strand" evidence="10">
    <location>
        <begin position="206"/>
        <end position="208"/>
    </location>
</feature>
<feature type="strand" evidence="10">
    <location>
        <begin position="211"/>
        <end position="215"/>
    </location>
</feature>
<feature type="turn" evidence="10">
    <location>
        <begin position="216"/>
        <end position="218"/>
    </location>
</feature>
<feature type="strand" evidence="10">
    <location>
        <begin position="219"/>
        <end position="231"/>
    </location>
</feature>
<feature type="strand" evidence="10">
    <location>
        <begin position="236"/>
        <end position="240"/>
    </location>
</feature>
<feature type="strand" evidence="10">
    <location>
        <begin position="246"/>
        <end position="250"/>
    </location>
</feature>
<feature type="strand" evidence="10">
    <location>
        <begin position="254"/>
        <end position="259"/>
    </location>
</feature>
<feature type="strand" evidence="10">
    <location>
        <begin position="261"/>
        <end position="266"/>
    </location>
</feature>
<feature type="strand" evidence="10">
    <location>
        <begin position="273"/>
        <end position="276"/>
    </location>
</feature>
<feature type="strand" evidence="10">
    <location>
        <begin position="278"/>
        <end position="281"/>
    </location>
</feature>
<feature type="strand" evidence="10">
    <location>
        <begin position="287"/>
        <end position="289"/>
    </location>
</feature>
<feature type="strand" evidence="10">
    <location>
        <begin position="307"/>
        <end position="312"/>
    </location>
</feature>
<feature type="turn" evidence="10">
    <location>
        <begin position="317"/>
        <end position="320"/>
    </location>
</feature>
<feature type="helix" evidence="10">
    <location>
        <begin position="328"/>
        <end position="341"/>
    </location>
</feature>
<feature type="strand" evidence="10">
    <location>
        <begin position="346"/>
        <end position="349"/>
    </location>
</feature>
<feature type="strand" evidence="10">
    <location>
        <begin position="355"/>
        <end position="361"/>
    </location>
</feature>
<feature type="helix" evidence="10">
    <location>
        <begin position="362"/>
        <end position="376"/>
    </location>
</feature>
<feature type="strand" evidence="10">
    <location>
        <begin position="380"/>
        <end position="382"/>
    </location>
</feature>
<feature type="strand" evidence="10">
    <location>
        <begin position="390"/>
        <end position="392"/>
    </location>
</feature>
<feature type="strand" evidence="10">
    <location>
        <begin position="395"/>
        <end position="408"/>
    </location>
</feature>
<feature type="helix" evidence="10">
    <location>
        <begin position="409"/>
        <end position="411"/>
    </location>
</feature>
<feature type="helix" evidence="10">
    <location>
        <begin position="412"/>
        <end position="421"/>
    </location>
</feature>
<feature type="strand" evidence="10">
    <location>
        <begin position="425"/>
        <end position="431"/>
    </location>
</feature>
<feature type="strand" evidence="10">
    <location>
        <begin position="433"/>
        <end position="444"/>
    </location>
</feature>
<feature type="helix" evidence="10">
    <location>
        <begin position="445"/>
        <end position="448"/>
    </location>
</feature>
<feature type="helix" evidence="10">
    <location>
        <begin position="451"/>
        <end position="458"/>
    </location>
</feature>
<feature type="turn" evidence="10">
    <location>
        <begin position="459"/>
        <end position="461"/>
    </location>
</feature>
<feature type="strand" evidence="10">
    <location>
        <begin position="464"/>
        <end position="474"/>
    </location>
</feature>
<feature type="strand" evidence="10">
    <location>
        <begin position="487"/>
        <end position="492"/>
    </location>
</feature>
<feature type="helix" evidence="10">
    <location>
        <begin position="498"/>
        <end position="504"/>
    </location>
</feature>
<feature type="turn" evidence="10">
    <location>
        <begin position="505"/>
        <end position="507"/>
    </location>
</feature>
<feature type="strand" evidence="10">
    <location>
        <begin position="508"/>
        <end position="511"/>
    </location>
</feature>
<feature type="strand" evidence="10">
    <location>
        <begin position="522"/>
        <end position="531"/>
    </location>
</feature>
<feature type="strand" evidence="10">
    <location>
        <begin position="533"/>
        <end position="535"/>
    </location>
</feature>
<feature type="helix" evidence="10">
    <location>
        <begin position="565"/>
        <end position="571"/>
    </location>
</feature>
<feature type="strand" evidence="10">
    <location>
        <begin position="576"/>
        <end position="580"/>
    </location>
</feature>
<feature type="strand" evidence="10">
    <location>
        <begin position="585"/>
        <end position="591"/>
    </location>
</feature>
<feature type="helix" evidence="10">
    <location>
        <begin position="594"/>
        <end position="598"/>
    </location>
</feature>
<evidence type="ECO:0000255" key="1">
    <source>
        <dbReference type="HAMAP-Rule" id="MF_00849"/>
    </source>
</evidence>
<evidence type="ECO:0000269" key="2">
    <source>
    </source>
</evidence>
<evidence type="ECO:0000269" key="3">
    <source>
    </source>
</evidence>
<evidence type="ECO:0000269" key="4">
    <source>
    </source>
</evidence>
<evidence type="ECO:0000303" key="5">
    <source>
    </source>
</evidence>
<evidence type="ECO:0000303" key="6">
    <source>
    </source>
</evidence>
<evidence type="ECO:0000305" key="7"/>
<evidence type="ECO:0000305" key="8">
    <source>
    </source>
</evidence>
<evidence type="ECO:0007744" key="9">
    <source>
        <dbReference type="PDB" id="8EWH"/>
    </source>
</evidence>
<evidence type="ECO:0007829" key="10">
    <source>
        <dbReference type="PDB" id="8EWH"/>
    </source>
</evidence>
<sequence length="607" mass="67377">MIENLRNIAIIAHVDHGKTTLVDKLLQQSGTFDARAETQERVMDSNDLEKERGITILAKNTAIKWNDYRINIVDTPGHADFGGEVERVMSMVDSVLLVVDAFDGPMPQTRFVTKKAFAHGLKPIVVINKVDRPGARPDWVVDQVFDLFVNLDATDEQLDFPIIYASALNGIAGLDHEDMAEDMTPLYQAIVDHVPAPDVDLDGPLQMQISQLDYNNYVGVIGIGRIKRGKVKPNQQVTIIDSEGKTRNAKVGKVLTHLGLERIDSNIAEAGDIIAITGLGELNISDTICDPQNVEALPALSVDEPTVSMFFCVNTSPFCGKEGKFVTSRQILDRLNKELVHNVALRVEETEDADAFRVSGRGELHLSVLIENMRREGFELAVSRPKVIFREIDGRKQEPYENVTLDVEEQHQGSVMQALGERKGDLKNMNPDGKGRVRLDYVIPSRGLIGFRSEFMTMTSGTGLLYSTFSHYDDIRPGEVGQRQNGVLISNGQGKAVAFALFGLQDRGKLFLGHGAEVYEGQIIGIHSRSNDLTVNCLTGKKLTNMRASGTDEAVILVPPIKMSLEQALEFIDDDELVEVTPTSIRIRKRHLTENDRRRANRGQKEE</sequence>
<gene>
    <name evidence="1 6" type="primary">bipA</name>
    <name type="ordered locus">STM4009</name>
</gene>
<accession>H9L427</accession>
<organism>
    <name type="scientific">Salmonella typhimurium (strain LT2 / SGSC1412 / ATCC 700720)</name>
    <dbReference type="NCBI Taxonomy" id="99287"/>
    <lineage>
        <taxon>Bacteria</taxon>
        <taxon>Pseudomonadati</taxon>
        <taxon>Pseudomonadota</taxon>
        <taxon>Gammaproteobacteria</taxon>
        <taxon>Enterobacterales</taxon>
        <taxon>Enterobacteriaceae</taxon>
        <taxon>Salmonella</taxon>
    </lineage>
</organism>
<proteinExistence type="evidence at protein level"/>